<evidence type="ECO:0000250" key="1"/>
<evidence type="ECO:0000255" key="2">
    <source>
        <dbReference type="PROSITE-ProRule" id="PRU00176"/>
    </source>
</evidence>
<evidence type="ECO:0000256" key="3">
    <source>
        <dbReference type="SAM" id="MobiDB-lite"/>
    </source>
</evidence>
<dbReference type="EMBL" id="L47126">
    <property type="protein sequence ID" value="AAA85379.1"/>
    <property type="molecule type" value="Genomic_DNA"/>
</dbReference>
<dbReference type="EMBL" id="BA000022">
    <property type="protein sequence ID" value="BAA10811.1"/>
    <property type="molecule type" value="Genomic_DNA"/>
</dbReference>
<dbReference type="PIR" id="S71780">
    <property type="entry name" value="S71780"/>
</dbReference>
<dbReference type="SMR" id="Q57014"/>
<dbReference type="STRING" id="1148.gene:10500315"/>
<dbReference type="PaxDb" id="1148-1001324"/>
<dbReference type="EnsemblBacteria" id="BAA10811">
    <property type="protein sequence ID" value="BAA10811"/>
    <property type="gene ID" value="BAA10811"/>
</dbReference>
<dbReference type="KEGG" id="syn:sll0517"/>
<dbReference type="eggNOG" id="COG0724">
    <property type="taxonomic scope" value="Bacteria"/>
</dbReference>
<dbReference type="InParanoid" id="Q57014"/>
<dbReference type="PhylomeDB" id="Q57014"/>
<dbReference type="Proteomes" id="UP000001425">
    <property type="component" value="Chromosome"/>
</dbReference>
<dbReference type="GO" id="GO:0003723">
    <property type="term" value="F:RNA binding"/>
    <property type="evidence" value="ECO:0000318"/>
    <property type="project" value="GO_Central"/>
</dbReference>
<dbReference type="FunFam" id="3.30.70.330:FF:001284">
    <property type="entry name" value="RNA-binding protein"/>
    <property type="match status" value="1"/>
</dbReference>
<dbReference type="Gene3D" id="3.30.70.330">
    <property type="match status" value="1"/>
</dbReference>
<dbReference type="InterPro" id="IPR012677">
    <property type="entry name" value="Nucleotide-bd_a/b_plait_sf"/>
</dbReference>
<dbReference type="InterPro" id="IPR035979">
    <property type="entry name" value="RBD_domain_sf"/>
</dbReference>
<dbReference type="InterPro" id="IPR000504">
    <property type="entry name" value="RRM_dom"/>
</dbReference>
<dbReference type="InterPro" id="IPR052462">
    <property type="entry name" value="SLIRP/GR-RBP-like"/>
</dbReference>
<dbReference type="PANTHER" id="PTHR48027">
    <property type="entry name" value="HETEROGENEOUS NUCLEAR RIBONUCLEOPROTEIN 87F-RELATED"/>
    <property type="match status" value="1"/>
</dbReference>
<dbReference type="Pfam" id="PF00076">
    <property type="entry name" value="RRM_1"/>
    <property type="match status" value="1"/>
</dbReference>
<dbReference type="SMART" id="SM00360">
    <property type="entry name" value="RRM"/>
    <property type="match status" value="1"/>
</dbReference>
<dbReference type="SUPFAM" id="SSF54928">
    <property type="entry name" value="RNA-binding domain, RBD"/>
    <property type="match status" value="1"/>
</dbReference>
<dbReference type="PROSITE" id="PS50102">
    <property type="entry name" value="RRM"/>
    <property type="match status" value="1"/>
</dbReference>
<name>RBPA_SYNY3</name>
<organism>
    <name type="scientific">Synechocystis sp. (strain ATCC 27184 / PCC 6803 / Kazusa)</name>
    <dbReference type="NCBI Taxonomy" id="1111708"/>
    <lineage>
        <taxon>Bacteria</taxon>
        <taxon>Bacillati</taxon>
        <taxon>Cyanobacteriota</taxon>
        <taxon>Cyanophyceae</taxon>
        <taxon>Synechococcales</taxon>
        <taxon>Merismopediaceae</taxon>
        <taxon>Synechocystis</taxon>
    </lineage>
</organism>
<proteinExistence type="inferred from homology"/>
<keyword id="KW-1185">Reference proteome</keyword>
<keyword id="KW-0694">RNA-binding</keyword>
<protein>
    <recommendedName>
        <fullName>Putative RNA-binding protein RbpA</fullName>
    </recommendedName>
</protein>
<feature type="initiator methionine" description="Removed" evidence="1">
    <location>
        <position position="1"/>
    </location>
</feature>
<feature type="chain" id="PRO_0000082039" description="Putative RNA-binding protein RbpA">
    <location>
        <begin position="2"/>
        <end position="101"/>
    </location>
</feature>
<feature type="domain" description="RRM" evidence="2">
    <location>
        <begin position="2"/>
        <end position="79"/>
    </location>
</feature>
<feature type="region of interest" description="Disordered" evidence="3">
    <location>
        <begin position="73"/>
        <end position="101"/>
    </location>
</feature>
<feature type="compositionally biased region" description="Basic and acidic residues" evidence="3">
    <location>
        <begin position="73"/>
        <end position="83"/>
    </location>
</feature>
<feature type="compositionally biased region" description="Gly residues" evidence="3">
    <location>
        <begin position="84"/>
        <end position="101"/>
    </location>
</feature>
<accession>Q57014</accession>
<reference key="1">
    <citation type="journal article" date="1996" name="Plant Mol. Biol.">
        <title>Cloning and characterization of the chlorophyll biosynthesis gene chlM from Synechocystis PCC 6803 by complementation of a bacteriochlorophyll biosynthesis mutant of Rhodobacter capsulatus.</title>
        <authorList>
            <person name="Smith C.A."/>
            <person name="Suzuki J.Y."/>
            <person name="Bauer C.E."/>
        </authorList>
    </citation>
    <scope>NUCLEOTIDE SEQUENCE [GENOMIC DNA]</scope>
</reference>
<reference key="2">
    <citation type="journal article" date="1995" name="DNA Res.">
        <title>Sequence analysis of the genome of the unicellular cyanobacterium Synechocystis sp. strain PCC6803. I. Sequence features in the 1 Mb region from map positions 64% to 92% of the genome.</title>
        <authorList>
            <person name="Kaneko T."/>
            <person name="Tanaka A."/>
            <person name="Sato S."/>
            <person name="Kotani H."/>
            <person name="Sazuka T."/>
            <person name="Miyajima N."/>
            <person name="Sugiura M."/>
            <person name="Tabata S."/>
        </authorList>
    </citation>
    <scope>NUCLEOTIDE SEQUENCE [LARGE SCALE GENOMIC DNA]</scope>
    <source>
        <strain>ATCC 27184 / PCC 6803 / N-1</strain>
    </source>
</reference>
<reference key="3">
    <citation type="journal article" date="1996" name="DNA Res.">
        <title>Sequence analysis of the genome of the unicellular cyanobacterium Synechocystis sp. strain PCC6803. II. Sequence determination of the entire genome and assignment of potential protein-coding regions.</title>
        <authorList>
            <person name="Kaneko T."/>
            <person name="Sato S."/>
            <person name="Kotani H."/>
            <person name="Tanaka A."/>
            <person name="Asamizu E."/>
            <person name="Nakamura Y."/>
            <person name="Miyajima N."/>
            <person name="Hirosawa M."/>
            <person name="Sugiura M."/>
            <person name="Sasamoto S."/>
            <person name="Kimura T."/>
            <person name="Hosouchi T."/>
            <person name="Matsuno A."/>
            <person name="Muraki A."/>
            <person name="Nakazaki N."/>
            <person name="Naruo K."/>
            <person name="Okumura S."/>
            <person name="Shimpo S."/>
            <person name="Takeuchi C."/>
            <person name="Wada T."/>
            <person name="Watanabe A."/>
            <person name="Yamada M."/>
            <person name="Yasuda M."/>
            <person name="Tabata S."/>
        </authorList>
    </citation>
    <scope>NUCLEOTIDE SEQUENCE [LARGE SCALE GENOMIC DNA]</scope>
    <source>
        <strain>ATCC 27184 / PCC 6803 / Kazusa</strain>
    </source>
</reference>
<gene>
    <name type="primary">rbpA</name>
    <name type="ordered locus">sll0517</name>
</gene>
<sequence length="101" mass="10962">MSIYVGNLSYDVSEADLTAVFAEYGSVKRVQLPTDRETGRMRGFGFVELEADAEETAAIEALDGAEWMGRDLKVNKAKPRENRSGGGSFGGGRKSYGGSRY</sequence>